<accession>Q9T2K9</accession>
<reference key="1">
    <citation type="journal article" date="1991" name="J. Biol. Chem.">
        <title>Tandem mass spectrometry identifies sites of three post-translational modifications of spinach light-harvesting chlorophyll protein II. Proteolytic cleavage, acetylation, and phosphorylation.</title>
        <authorList>
            <person name="Michel H."/>
            <person name="Griffin P.R."/>
            <person name="Shabanowitz J."/>
            <person name="Hunt D.F."/>
            <person name="Bennett J."/>
        </authorList>
    </citation>
    <scope>PROTEIN SEQUENCE</scope>
    <scope>SUBCELLULAR LOCATION</scope>
    <scope>ACETYLATION AT ARG-1</scope>
    <scope>PHOSPHORYLATION AT THR-3</scope>
    <source>
        <tissue evidence="2">Leaf</tissue>
    </source>
</reference>
<keyword id="KW-0007">Acetylation</keyword>
<keyword id="KW-0148">Chlorophyll</keyword>
<keyword id="KW-0150">Chloroplast</keyword>
<keyword id="KW-0157">Chromophore</keyword>
<keyword id="KW-0903">Direct protein sequencing</keyword>
<keyword id="KW-0460">Magnesium</keyword>
<keyword id="KW-0472">Membrane</keyword>
<keyword id="KW-0479">Metal-binding</keyword>
<keyword id="KW-0597">Phosphoprotein</keyword>
<keyword id="KW-0602">Photosynthesis</keyword>
<keyword id="KW-0603">Photosystem I</keyword>
<keyword id="KW-0604">Photosystem II</keyword>
<keyword id="KW-0934">Plastid</keyword>
<keyword id="KW-1185">Reference proteome</keyword>
<keyword id="KW-0793">Thylakoid</keyword>
<feature type="chain" id="PRO_0000165477" description="Chlorophyll a-b binding protein">
    <location>
        <begin position="1"/>
        <end position="9" status="greater than"/>
    </location>
</feature>
<feature type="modified residue" description="N2-acetylarginine" evidence="2">
    <location>
        <position position="1"/>
    </location>
</feature>
<feature type="modified residue" description="Phosphothreonine" evidence="2">
    <location>
        <position position="3"/>
    </location>
</feature>
<feature type="non-terminal residue" evidence="3">
    <location>
        <position position="9"/>
    </location>
</feature>
<name>CB22_SPIOL</name>
<comment type="function">
    <text>The light-harvesting complex (LHC) functions as a light receptor, it captures and delivers excitation energy to photosystems with which it is closely associated.</text>
</comment>
<comment type="cofactor">
    <text evidence="1">Binds at least 14 chlorophylls (8 Chl-a and 6 Chl-b) and carotenoids such as lutein and neoxanthin.</text>
</comment>
<comment type="subunit">
    <text>The LHC complex consists of chlorophyll a-b binding proteins.</text>
</comment>
<comment type="subcellular location">
    <subcellularLocation>
        <location evidence="2">Plastid</location>
        <location evidence="2">Chloroplast thylakoid membrane</location>
        <topology evidence="2">Multi-pass membrane protein</topology>
    </subcellularLocation>
</comment>
<comment type="domain">
    <text>The N-terminus of the protein extends into the stroma where it is involved with adhesion of granal membranes and post-translational modifications; both are believed to mediate the distribution of excitation energy between photosystems I and II.</text>
</comment>
<comment type="PTM">
    <text evidence="1">Photoregulated by reversible phosphorylation of its threonine residues.</text>
</comment>
<comment type="similarity">
    <text evidence="4">Belongs to the light-harvesting chlorophyll a/b-binding (LHC) protein family.</text>
</comment>
<proteinExistence type="evidence at protein level"/>
<organism>
    <name type="scientific">Spinacia oleracea</name>
    <name type="common">Spinach</name>
    <dbReference type="NCBI Taxonomy" id="3562"/>
    <lineage>
        <taxon>Eukaryota</taxon>
        <taxon>Viridiplantae</taxon>
        <taxon>Streptophyta</taxon>
        <taxon>Embryophyta</taxon>
        <taxon>Tracheophyta</taxon>
        <taxon>Spermatophyta</taxon>
        <taxon>Magnoliopsida</taxon>
        <taxon>eudicotyledons</taxon>
        <taxon>Gunneridae</taxon>
        <taxon>Pentapetalae</taxon>
        <taxon>Caryophyllales</taxon>
        <taxon>Chenopodiaceae</taxon>
        <taxon>Chenopodioideae</taxon>
        <taxon>Anserineae</taxon>
        <taxon>Spinacia</taxon>
    </lineage>
</organism>
<dbReference type="iPTMnet" id="Q9T2K9"/>
<dbReference type="Proteomes" id="UP001155700">
    <property type="component" value="Unplaced"/>
</dbReference>
<dbReference type="GO" id="GO:0009535">
    <property type="term" value="C:chloroplast thylakoid membrane"/>
    <property type="evidence" value="ECO:0000314"/>
    <property type="project" value="UniProtKB"/>
</dbReference>
<dbReference type="GO" id="GO:0009522">
    <property type="term" value="C:photosystem I"/>
    <property type="evidence" value="ECO:0007669"/>
    <property type="project" value="UniProtKB-KW"/>
</dbReference>
<dbReference type="GO" id="GO:0009523">
    <property type="term" value="C:photosystem II"/>
    <property type="evidence" value="ECO:0007669"/>
    <property type="project" value="UniProtKB-KW"/>
</dbReference>
<dbReference type="GO" id="GO:0016168">
    <property type="term" value="F:chlorophyll binding"/>
    <property type="evidence" value="ECO:0007669"/>
    <property type="project" value="UniProtKB-KW"/>
</dbReference>
<dbReference type="GO" id="GO:0046872">
    <property type="term" value="F:metal ion binding"/>
    <property type="evidence" value="ECO:0007669"/>
    <property type="project" value="UniProtKB-KW"/>
</dbReference>
<dbReference type="GO" id="GO:0015979">
    <property type="term" value="P:photosynthesis"/>
    <property type="evidence" value="ECO:0007669"/>
    <property type="project" value="UniProtKB-KW"/>
</dbReference>
<sequence length="9" mass="1042">RRTVKSAPQ</sequence>
<evidence type="ECO:0000250" key="1"/>
<evidence type="ECO:0000269" key="2">
    <source>
    </source>
</evidence>
<evidence type="ECO:0000303" key="3">
    <source>
    </source>
</evidence>
<evidence type="ECO:0000305" key="4"/>
<protein>
    <recommendedName>
        <fullName>Chlorophyll a-b binding protein</fullName>
    </recommendedName>
    <alternativeName>
        <fullName>LHCII type II CAB</fullName>
        <shortName>LHCP</shortName>
    </alternativeName>
</protein>